<organism>
    <name type="scientific">Acinetobacter baumannii (strain ATCC 17978 / DSM 105126 / CIP 53.77 / LMG 1025 / NCDC KC755 / 5377)</name>
    <dbReference type="NCBI Taxonomy" id="400667"/>
    <lineage>
        <taxon>Bacteria</taxon>
        <taxon>Pseudomonadati</taxon>
        <taxon>Pseudomonadota</taxon>
        <taxon>Gammaproteobacteria</taxon>
        <taxon>Moraxellales</taxon>
        <taxon>Moraxellaceae</taxon>
        <taxon>Acinetobacter</taxon>
        <taxon>Acinetobacter calcoaceticus/baumannii complex</taxon>
    </lineage>
</organism>
<keyword id="KW-0067">ATP-binding</keyword>
<keyword id="KW-0414">Isoprene biosynthesis</keyword>
<keyword id="KW-0418">Kinase</keyword>
<keyword id="KW-0547">Nucleotide-binding</keyword>
<keyword id="KW-0808">Transferase</keyword>
<dbReference type="EC" id="2.7.1.148" evidence="1"/>
<dbReference type="EMBL" id="CP000521">
    <property type="protein sequence ID" value="ABO11268.2"/>
    <property type="molecule type" value="Genomic_DNA"/>
</dbReference>
<dbReference type="RefSeq" id="WP_000621866.1">
    <property type="nucleotide sequence ID" value="NZ_CP053098.1"/>
</dbReference>
<dbReference type="SMR" id="A3M2X4"/>
<dbReference type="GeneID" id="92892765"/>
<dbReference type="KEGG" id="acb:A1S_0834"/>
<dbReference type="HOGENOM" id="CLU_053057_3_0_6"/>
<dbReference type="UniPathway" id="UPA00056">
    <property type="reaction ID" value="UER00094"/>
</dbReference>
<dbReference type="GO" id="GO:0050515">
    <property type="term" value="F:4-(cytidine 5'-diphospho)-2-C-methyl-D-erythritol kinase activity"/>
    <property type="evidence" value="ECO:0007669"/>
    <property type="project" value="UniProtKB-UniRule"/>
</dbReference>
<dbReference type="GO" id="GO:0005524">
    <property type="term" value="F:ATP binding"/>
    <property type="evidence" value="ECO:0007669"/>
    <property type="project" value="UniProtKB-UniRule"/>
</dbReference>
<dbReference type="GO" id="GO:0019288">
    <property type="term" value="P:isopentenyl diphosphate biosynthetic process, methylerythritol 4-phosphate pathway"/>
    <property type="evidence" value="ECO:0007669"/>
    <property type="project" value="UniProtKB-UniRule"/>
</dbReference>
<dbReference type="GO" id="GO:0016114">
    <property type="term" value="P:terpenoid biosynthetic process"/>
    <property type="evidence" value="ECO:0007669"/>
    <property type="project" value="InterPro"/>
</dbReference>
<dbReference type="Gene3D" id="3.30.230.10">
    <property type="match status" value="1"/>
</dbReference>
<dbReference type="Gene3D" id="3.30.70.890">
    <property type="entry name" value="GHMP kinase, C-terminal domain"/>
    <property type="match status" value="1"/>
</dbReference>
<dbReference type="HAMAP" id="MF_00061">
    <property type="entry name" value="IspE"/>
    <property type="match status" value="1"/>
</dbReference>
<dbReference type="InterPro" id="IPR013750">
    <property type="entry name" value="GHMP_kinase_C_dom"/>
</dbReference>
<dbReference type="InterPro" id="IPR036554">
    <property type="entry name" value="GHMP_kinase_C_sf"/>
</dbReference>
<dbReference type="InterPro" id="IPR006204">
    <property type="entry name" value="GHMP_kinase_N_dom"/>
</dbReference>
<dbReference type="InterPro" id="IPR004424">
    <property type="entry name" value="IspE"/>
</dbReference>
<dbReference type="InterPro" id="IPR020568">
    <property type="entry name" value="Ribosomal_Su5_D2-typ_SF"/>
</dbReference>
<dbReference type="InterPro" id="IPR014721">
    <property type="entry name" value="Ribsml_uS5_D2-typ_fold_subgr"/>
</dbReference>
<dbReference type="NCBIfam" id="TIGR00154">
    <property type="entry name" value="ispE"/>
    <property type="match status" value="1"/>
</dbReference>
<dbReference type="PANTHER" id="PTHR43527">
    <property type="entry name" value="4-DIPHOSPHOCYTIDYL-2-C-METHYL-D-ERYTHRITOL KINASE, CHLOROPLASTIC"/>
    <property type="match status" value="1"/>
</dbReference>
<dbReference type="PANTHER" id="PTHR43527:SF2">
    <property type="entry name" value="4-DIPHOSPHOCYTIDYL-2-C-METHYL-D-ERYTHRITOL KINASE, CHLOROPLASTIC"/>
    <property type="match status" value="1"/>
</dbReference>
<dbReference type="Pfam" id="PF08544">
    <property type="entry name" value="GHMP_kinases_C"/>
    <property type="match status" value="1"/>
</dbReference>
<dbReference type="Pfam" id="PF00288">
    <property type="entry name" value="GHMP_kinases_N"/>
    <property type="match status" value="1"/>
</dbReference>
<dbReference type="PIRSF" id="PIRSF010376">
    <property type="entry name" value="IspE"/>
    <property type="match status" value="1"/>
</dbReference>
<dbReference type="SUPFAM" id="SSF55060">
    <property type="entry name" value="GHMP Kinase, C-terminal domain"/>
    <property type="match status" value="1"/>
</dbReference>
<dbReference type="SUPFAM" id="SSF54211">
    <property type="entry name" value="Ribosomal protein S5 domain 2-like"/>
    <property type="match status" value="1"/>
</dbReference>
<accession>A3M2X4</accession>
<reference key="1">
    <citation type="journal article" date="2007" name="Genes Dev.">
        <title>New insights into Acinetobacter baumannii pathogenesis revealed by high-density pyrosequencing and transposon mutagenesis.</title>
        <authorList>
            <person name="Smith M.G."/>
            <person name="Gianoulis T.A."/>
            <person name="Pukatzki S."/>
            <person name="Mekalanos J.J."/>
            <person name="Ornston L.N."/>
            <person name="Gerstein M."/>
            <person name="Snyder M."/>
        </authorList>
    </citation>
    <scope>NUCLEOTIDE SEQUENCE [LARGE SCALE GENOMIC DNA]</scope>
    <source>
        <strain>ATCC 17978 / DSM 105126 / CIP 53.77 / LMG 1025 / NCDC KC755 / 5377</strain>
    </source>
</reference>
<comment type="function">
    <text evidence="1">Catalyzes the phosphorylation of the position 2 hydroxy group of 4-diphosphocytidyl-2C-methyl-D-erythritol.</text>
</comment>
<comment type="catalytic activity">
    <reaction evidence="1">
        <text>4-CDP-2-C-methyl-D-erythritol + ATP = 4-CDP-2-C-methyl-D-erythritol 2-phosphate + ADP + H(+)</text>
        <dbReference type="Rhea" id="RHEA:18437"/>
        <dbReference type="ChEBI" id="CHEBI:15378"/>
        <dbReference type="ChEBI" id="CHEBI:30616"/>
        <dbReference type="ChEBI" id="CHEBI:57823"/>
        <dbReference type="ChEBI" id="CHEBI:57919"/>
        <dbReference type="ChEBI" id="CHEBI:456216"/>
        <dbReference type="EC" id="2.7.1.148"/>
    </reaction>
</comment>
<comment type="pathway">
    <text evidence="1">Isoprenoid biosynthesis; isopentenyl diphosphate biosynthesis via DXP pathway; isopentenyl diphosphate from 1-deoxy-D-xylulose 5-phosphate: step 3/6.</text>
</comment>
<comment type="similarity">
    <text evidence="1">Belongs to the GHMP kinase family. IspE subfamily.</text>
</comment>
<protein>
    <recommendedName>
        <fullName evidence="1">4-diphosphocytidyl-2-C-methyl-D-erythritol kinase</fullName>
        <shortName evidence="1">CMK</shortName>
        <ecNumber evidence="1">2.7.1.148</ecNumber>
    </recommendedName>
    <alternativeName>
        <fullName evidence="1">4-(cytidine-5'-diphospho)-2-C-methyl-D-erythritol kinase</fullName>
    </alternativeName>
</protein>
<gene>
    <name evidence="1" type="primary">ispE</name>
    <name type="ordered locus">A1S_0834</name>
</gene>
<evidence type="ECO:0000255" key="1">
    <source>
        <dbReference type="HAMAP-Rule" id="MF_00061"/>
    </source>
</evidence>
<proteinExistence type="inferred from homology"/>
<name>ISPE_ACIBT</name>
<sequence>MIRVPSPAKLNLFLHITGRRENGYHELQTIFQLIDLYDWMTFTPISEDEIQIEGLGEVQLEQNLIYRAAQILRPHAQNPCGLHIKIEKNIPMGAGLGGGSSNAATTLIVLNQLWQCGLTEEQLAQFGVKLGADVPIFIYGLNAWAEGIGEHLSFIDLDQKQFIVLKPDCFISTQLLFSQKTLTRDSKPTTFCAYQLEPSNFGNNFEPLARELYPEVEEAMQYLDQFGHAKLTGTGACVFAEVTDEMNVDDILKHAPCKAYLVHSLKESPLRHFKVAS</sequence>
<feature type="chain" id="PRO_1000092055" description="4-diphosphocytidyl-2-C-methyl-D-erythritol kinase">
    <location>
        <begin position="1"/>
        <end position="277"/>
    </location>
</feature>
<feature type="active site" evidence="1">
    <location>
        <position position="9"/>
    </location>
</feature>
<feature type="active site" evidence="1">
    <location>
        <position position="133"/>
    </location>
</feature>
<feature type="binding site" evidence="1">
    <location>
        <begin position="91"/>
        <end position="101"/>
    </location>
    <ligand>
        <name>ATP</name>
        <dbReference type="ChEBI" id="CHEBI:30616"/>
    </ligand>
</feature>